<name>RL36_EHRCR</name>
<keyword id="KW-1185">Reference proteome</keyword>
<keyword id="KW-0687">Ribonucleoprotein</keyword>
<keyword id="KW-0689">Ribosomal protein</keyword>
<protein>
    <recommendedName>
        <fullName evidence="1">Large ribosomal subunit protein bL36</fullName>
    </recommendedName>
    <alternativeName>
        <fullName evidence="2">50S ribosomal protein L36</fullName>
    </alternativeName>
</protein>
<sequence length="42" mass="4964">MKVIGSLKSAKVRDKDCRVVRRKGRIYVINKKNPRFKARQGY</sequence>
<comment type="similarity">
    <text evidence="1">Belongs to the bacterial ribosomal protein bL36 family.</text>
</comment>
<evidence type="ECO:0000255" key="1">
    <source>
        <dbReference type="HAMAP-Rule" id="MF_00251"/>
    </source>
</evidence>
<evidence type="ECO:0000305" key="2"/>
<dbReference type="EMBL" id="CP000236">
    <property type="protein sequence ID" value="ABD44822.1"/>
    <property type="molecule type" value="Genomic_DNA"/>
</dbReference>
<dbReference type="SMR" id="Q2GGG8"/>
<dbReference type="STRING" id="205920.ECH_0656"/>
<dbReference type="KEGG" id="ech:ECH_0656"/>
<dbReference type="eggNOG" id="COG0257">
    <property type="taxonomic scope" value="Bacteria"/>
</dbReference>
<dbReference type="HOGENOM" id="CLU_135723_3_2_5"/>
<dbReference type="Proteomes" id="UP000008320">
    <property type="component" value="Chromosome"/>
</dbReference>
<dbReference type="GO" id="GO:1990904">
    <property type="term" value="C:ribonucleoprotein complex"/>
    <property type="evidence" value="ECO:0007669"/>
    <property type="project" value="UniProtKB-KW"/>
</dbReference>
<dbReference type="GO" id="GO:0005840">
    <property type="term" value="C:ribosome"/>
    <property type="evidence" value="ECO:0007669"/>
    <property type="project" value="UniProtKB-KW"/>
</dbReference>
<dbReference type="GO" id="GO:0003735">
    <property type="term" value="F:structural constituent of ribosome"/>
    <property type="evidence" value="ECO:0007669"/>
    <property type="project" value="InterPro"/>
</dbReference>
<dbReference type="GO" id="GO:0006412">
    <property type="term" value="P:translation"/>
    <property type="evidence" value="ECO:0007669"/>
    <property type="project" value="UniProtKB-UniRule"/>
</dbReference>
<dbReference type="HAMAP" id="MF_00251">
    <property type="entry name" value="Ribosomal_bL36"/>
    <property type="match status" value="1"/>
</dbReference>
<dbReference type="InterPro" id="IPR000473">
    <property type="entry name" value="Ribosomal_bL36"/>
</dbReference>
<dbReference type="InterPro" id="IPR035977">
    <property type="entry name" value="Ribosomal_bL36_sp"/>
</dbReference>
<dbReference type="InterPro" id="IPR047621">
    <property type="entry name" value="Ribosomal_L36_bact"/>
</dbReference>
<dbReference type="NCBIfam" id="NF002021">
    <property type="entry name" value="PRK00831.1"/>
    <property type="match status" value="1"/>
</dbReference>
<dbReference type="NCBIfam" id="TIGR01022">
    <property type="entry name" value="rpmJ_bact"/>
    <property type="match status" value="1"/>
</dbReference>
<dbReference type="PANTHER" id="PTHR47781">
    <property type="entry name" value="50S RIBOSOMAL PROTEIN L36 2"/>
    <property type="match status" value="1"/>
</dbReference>
<dbReference type="PANTHER" id="PTHR47781:SF1">
    <property type="entry name" value="LARGE RIBOSOMAL SUBUNIT PROTEIN BL36B"/>
    <property type="match status" value="1"/>
</dbReference>
<dbReference type="Pfam" id="PF00444">
    <property type="entry name" value="Ribosomal_L36"/>
    <property type="match status" value="1"/>
</dbReference>
<dbReference type="SUPFAM" id="SSF57840">
    <property type="entry name" value="Ribosomal protein L36"/>
    <property type="match status" value="1"/>
</dbReference>
<dbReference type="PROSITE" id="PS00828">
    <property type="entry name" value="RIBOSOMAL_L36"/>
    <property type="match status" value="1"/>
</dbReference>
<organism>
    <name type="scientific">Ehrlichia chaffeensis (strain ATCC CRL-10679 / Arkansas)</name>
    <dbReference type="NCBI Taxonomy" id="205920"/>
    <lineage>
        <taxon>Bacteria</taxon>
        <taxon>Pseudomonadati</taxon>
        <taxon>Pseudomonadota</taxon>
        <taxon>Alphaproteobacteria</taxon>
        <taxon>Rickettsiales</taxon>
        <taxon>Anaplasmataceae</taxon>
        <taxon>Ehrlichia</taxon>
    </lineage>
</organism>
<gene>
    <name evidence="1" type="primary">rpmJ</name>
    <name type="ordered locus">ECH_0656</name>
</gene>
<reference key="1">
    <citation type="journal article" date="2006" name="PLoS Genet.">
        <title>Comparative genomics of emerging human ehrlichiosis agents.</title>
        <authorList>
            <person name="Dunning Hotopp J.C."/>
            <person name="Lin M."/>
            <person name="Madupu R."/>
            <person name="Crabtree J."/>
            <person name="Angiuoli S.V."/>
            <person name="Eisen J.A."/>
            <person name="Seshadri R."/>
            <person name="Ren Q."/>
            <person name="Wu M."/>
            <person name="Utterback T.R."/>
            <person name="Smith S."/>
            <person name="Lewis M."/>
            <person name="Khouri H."/>
            <person name="Zhang C."/>
            <person name="Niu H."/>
            <person name="Lin Q."/>
            <person name="Ohashi N."/>
            <person name="Zhi N."/>
            <person name="Nelson W.C."/>
            <person name="Brinkac L.M."/>
            <person name="Dodson R.J."/>
            <person name="Rosovitz M.J."/>
            <person name="Sundaram J.P."/>
            <person name="Daugherty S.C."/>
            <person name="Davidsen T."/>
            <person name="Durkin A.S."/>
            <person name="Gwinn M.L."/>
            <person name="Haft D.H."/>
            <person name="Selengut J.D."/>
            <person name="Sullivan S.A."/>
            <person name="Zafar N."/>
            <person name="Zhou L."/>
            <person name="Benahmed F."/>
            <person name="Forberger H."/>
            <person name="Halpin R."/>
            <person name="Mulligan S."/>
            <person name="Robinson J."/>
            <person name="White O."/>
            <person name="Rikihisa Y."/>
            <person name="Tettelin H."/>
        </authorList>
    </citation>
    <scope>NUCLEOTIDE SEQUENCE [LARGE SCALE GENOMIC DNA]</scope>
    <source>
        <strain>ATCC CRL-10679 / Arkansas</strain>
    </source>
</reference>
<proteinExistence type="inferred from homology"/>
<accession>Q2GGG8</accession>
<feature type="chain" id="PRO_0000302199" description="Large ribosomal subunit protein bL36">
    <location>
        <begin position="1"/>
        <end position="42"/>
    </location>
</feature>